<sequence length="404" mass="46793">MAAVPELLEQQEEDRSKLRSVSVDLNVDPSLQIDIPDALSERDKVKFTVHTKTTLPTFQSPEFSVTRQHEDFVWLHDTLTETTDYAGLIIPPAPTKPDFDGPREKMQKLGEGEGSMTKEEFAKMKQELEAEYLAVFKKTVSSHEVFLQRLSSHPVLSKDRNFHVFLEYDQDLSVRRKNTKEMFGGFFKSVVKSADEVLFSGVKEVDDFFEQEKNFLINYYNRIKDSCAKADKMTRSHKNVADDYIHTAACLHSLALEEPTVIKKYLLKVAELFEKLRKVEGRVSSDEDLKLTELLRYYMLNIEAAKDLLYRRTKALIDYENSNKALDKARLKSKDVKLAETHQQECCQKFEQLSESAKEELINFKRKRVAAFRKNLIEMSELEIKHARNNVSLLQSCIDLFKNN</sequence>
<gene>
    <name type="primary">Snx5</name>
</gene>
<keyword id="KW-0002">3D-structure</keyword>
<keyword id="KW-0007">Acetylation</keyword>
<keyword id="KW-1003">Cell membrane</keyword>
<keyword id="KW-0966">Cell projection</keyword>
<keyword id="KW-0963">Cytoplasm</keyword>
<keyword id="KW-0968">Cytoplasmic vesicle</keyword>
<keyword id="KW-0254">Endocytosis</keyword>
<keyword id="KW-0967">Endosome</keyword>
<keyword id="KW-0446">Lipid-binding</keyword>
<keyword id="KW-0472">Membrane</keyword>
<keyword id="KW-0597">Phosphoprotein</keyword>
<keyword id="KW-0653">Protein transport</keyword>
<keyword id="KW-1185">Reference proteome</keyword>
<keyword id="KW-0813">Transport</keyword>
<accession>B1H267</accession>
<name>SNX5_RAT</name>
<proteinExistence type="evidence at protein level"/>
<organism>
    <name type="scientific">Rattus norvegicus</name>
    <name type="common">Rat</name>
    <dbReference type="NCBI Taxonomy" id="10116"/>
    <lineage>
        <taxon>Eukaryota</taxon>
        <taxon>Metazoa</taxon>
        <taxon>Chordata</taxon>
        <taxon>Craniata</taxon>
        <taxon>Vertebrata</taxon>
        <taxon>Euteleostomi</taxon>
        <taxon>Mammalia</taxon>
        <taxon>Eutheria</taxon>
        <taxon>Euarchontoglires</taxon>
        <taxon>Glires</taxon>
        <taxon>Rodentia</taxon>
        <taxon>Myomorpha</taxon>
        <taxon>Muroidea</taxon>
        <taxon>Muridae</taxon>
        <taxon>Murinae</taxon>
        <taxon>Rattus</taxon>
    </lineage>
</organism>
<protein>
    <recommendedName>
        <fullName>Sorting nexin-5</fullName>
    </recommendedName>
</protein>
<feature type="initiator methionine" description="Removed" evidence="1">
    <location>
        <position position="1"/>
    </location>
</feature>
<feature type="chain" id="PRO_0000405693" description="Sorting nexin-5">
    <location>
        <begin position="2"/>
        <end position="404"/>
    </location>
</feature>
<feature type="domain" description="PX" evidence="2">
    <location>
        <begin position="25"/>
        <end position="172"/>
    </location>
</feature>
<feature type="domain" description="BAR">
    <location>
        <begin position="202"/>
        <end position="404"/>
    </location>
</feature>
<feature type="region of interest" description="Interaction with DOCK1" evidence="1">
    <location>
        <begin position="169"/>
        <end position="261"/>
    </location>
</feature>
<feature type="region of interest" description="Membrane-binding amphipathic helix" evidence="1">
    <location>
        <begin position="183"/>
        <end position="200"/>
    </location>
</feature>
<feature type="binding site" evidence="5">
    <location>
        <begin position="40"/>
        <end position="46"/>
    </location>
    <ligand>
        <name>a 1,2-diacyl-sn-glycero-3-phospho-(1D-myo-inositol-4,5-bisphosphate)</name>
        <dbReference type="ChEBI" id="CHEBI:58456"/>
    </ligand>
</feature>
<feature type="binding site" evidence="5">
    <location>
        <begin position="99"/>
        <end position="105"/>
    </location>
    <ligand>
        <name>a 1,2-diacyl-sn-glycero-3-phospho-(1D-myo-inositol-4,5-bisphosphate)</name>
        <dbReference type="ChEBI" id="CHEBI:58456"/>
    </ligand>
</feature>
<feature type="binding site" evidence="5">
    <location>
        <begin position="113"/>
        <end position="116"/>
    </location>
    <ligand>
        <name>a 1,2-diacyl-sn-glycero-3-phospho-(1D-myo-inositol-4,5-bisphosphate)</name>
        <dbReference type="ChEBI" id="CHEBI:58456"/>
    </ligand>
</feature>
<feature type="modified residue" description="N-acetylalanine" evidence="1">
    <location>
        <position position="2"/>
    </location>
</feature>
<feature type="modified residue" description="Phosphoserine" evidence="1">
    <location>
        <position position="193"/>
    </location>
</feature>
<feature type="modified residue" description="N6-acetyllysine" evidence="1">
    <location>
        <position position="275"/>
    </location>
</feature>
<feature type="strand" evidence="6">
    <location>
        <begin position="30"/>
        <end position="41"/>
    </location>
</feature>
<feature type="strand" evidence="6">
    <location>
        <begin position="44"/>
        <end position="53"/>
    </location>
</feature>
<feature type="strand" evidence="6">
    <location>
        <begin position="58"/>
        <end position="67"/>
    </location>
</feature>
<feature type="helix" evidence="6">
    <location>
        <begin position="69"/>
        <end position="81"/>
    </location>
</feature>
<feature type="helix" evidence="6">
    <location>
        <begin position="83"/>
        <end position="85"/>
    </location>
</feature>
<feature type="helix" evidence="6">
    <location>
        <begin position="100"/>
        <end position="111"/>
    </location>
</feature>
<feature type="helix" evidence="6">
    <location>
        <begin position="112"/>
        <end position="115"/>
    </location>
</feature>
<feature type="helix" evidence="6">
    <location>
        <begin position="118"/>
        <end position="152"/>
    </location>
</feature>
<feature type="helix" evidence="6">
    <location>
        <begin position="156"/>
        <end position="158"/>
    </location>
</feature>
<feature type="helix" evidence="6">
    <location>
        <begin position="160"/>
        <end position="167"/>
    </location>
</feature>
<evidence type="ECO:0000250" key="1">
    <source>
        <dbReference type="UniProtKB" id="Q9Y5X3"/>
    </source>
</evidence>
<evidence type="ECO:0000255" key="2">
    <source>
        <dbReference type="PROSITE-ProRule" id="PRU00147"/>
    </source>
</evidence>
<evidence type="ECO:0000269" key="3">
    <source>
    </source>
</evidence>
<evidence type="ECO:0000305" key="4"/>
<evidence type="ECO:0000305" key="5">
    <source>
    </source>
</evidence>
<evidence type="ECO:0007829" key="6">
    <source>
        <dbReference type="PDB" id="3HPC"/>
    </source>
</evidence>
<dbReference type="EMBL" id="BC160883">
    <property type="protein sequence ID" value="AAI60883.1"/>
    <property type="molecule type" value="mRNA"/>
</dbReference>
<dbReference type="RefSeq" id="NP_001386227.1">
    <property type="nucleotide sequence ID" value="NM_001399298.1"/>
</dbReference>
<dbReference type="RefSeq" id="XP_006235181.1">
    <property type="nucleotide sequence ID" value="XM_006235119.2"/>
</dbReference>
<dbReference type="PDB" id="3HPB">
    <property type="method" value="X-ray"/>
    <property type="resolution" value="2.19 A"/>
    <property type="chains" value="A=20-180"/>
</dbReference>
<dbReference type="PDB" id="3HPC">
    <property type="method" value="X-ray"/>
    <property type="resolution" value="1.47 A"/>
    <property type="chains" value="X=20-180"/>
</dbReference>
<dbReference type="PDBsum" id="3HPB"/>
<dbReference type="PDBsum" id="3HPC"/>
<dbReference type="SMR" id="B1H267"/>
<dbReference type="FunCoup" id="B1H267">
    <property type="interactions" value="4303"/>
</dbReference>
<dbReference type="STRING" id="10116.ENSRNOP00000066353"/>
<dbReference type="iPTMnet" id="B1H267"/>
<dbReference type="PhosphoSitePlus" id="B1H267"/>
<dbReference type="jPOST" id="B1H267"/>
<dbReference type="PaxDb" id="10116-ENSRNOP00000008934"/>
<dbReference type="PeptideAtlas" id="B1H267"/>
<dbReference type="Ensembl" id="ENSRNOT00000074606.3">
    <property type="protein sequence ID" value="ENSRNOP00000066353.2"/>
    <property type="gene ID" value="ENSRNOG00000006077.9"/>
</dbReference>
<dbReference type="GeneID" id="296199"/>
<dbReference type="UCSC" id="RGD:1310190">
    <property type="organism name" value="rat"/>
</dbReference>
<dbReference type="AGR" id="RGD:1310190"/>
<dbReference type="RGD" id="1310190">
    <property type="gene designation" value="Snx5"/>
</dbReference>
<dbReference type="eggNOG" id="KOG1660">
    <property type="taxonomic scope" value="Eukaryota"/>
</dbReference>
<dbReference type="GeneTree" id="ENSGT00940000154632"/>
<dbReference type="InParanoid" id="B1H267"/>
<dbReference type="OMA" id="ECCQRFE"/>
<dbReference type="PhylomeDB" id="B1H267"/>
<dbReference type="TreeFam" id="TF313698"/>
<dbReference type="Reactome" id="R-RNO-432722">
    <property type="pathway name" value="Golgi Associated Vesicle Biogenesis"/>
</dbReference>
<dbReference type="EvolutionaryTrace" id="B1H267"/>
<dbReference type="PRO" id="PR:B1H267"/>
<dbReference type="Proteomes" id="UP000002494">
    <property type="component" value="Chromosome 3"/>
</dbReference>
<dbReference type="Bgee" id="ENSRNOG00000006077">
    <property type="expression patterns" value="Expressed in spleen and 19 other cell types or tissues"/>
</dbReference>
<dbReference type="GO" id="GO:0005903">
    <property type="term" value="C:brush border"/>
    <property type="evidence" value="ECO:0000314"/>
    <property type="project" value="RGD"/>
</dbReference>
<dbReference type="GO" id="GO:0098559">
    <property type="term" value="C:cytoplasmic side of early endosome membrane"/>
    <property type="evidence" value="ECO:0000250"/>
    <property type="project" value="UniProtKB"/>
</dbReference>
<dbReference type="GO" id="GO:0009898">
    <property type="term" value="C:cytoplasmic side of plasma membrane"/>
    <property type="evidence" value="ECO:0000250"/>
    <property type="project" value="UniProtKB"/>
</dbReference>
<dbReference type="GO" id="GO:0005829">
    <property type="term" value="C:cytosol"/>
    <property type="evidence" value="ECO:0007669"/>
    <property type="project" value="Ensembl"/>
</dbReference>
<dbReference type="GO" id="GO:0005768">
    <property type="term" value="C:endosome"/>
    <property type="evidence" value="ECO:0000314"/>
    <property type="project" value="RGD"/>
</dbReference>
<dbReference type="GO" id="GO:0070685">
    <property type="term" value="C:macropinocytic cup"/>
    <property type="evidence" value="ECO:0000250"/>
    <property type="project" value="UniProtKB"/>
</dbReference>
<dbReference type="GO" id="GO:0048471">
    <property type="term" value="C:perinuclear region of cytoplasm"/>
    <property type="evidence" value="ECO:0000266"/>
    <property type="project" value="RGD"/>
</dbReference>
<dbReference type="GO" id="GO:0001891">
    <property type="term" value="C:phagocytic cup"/>
    <property type="evidence" value="ECO:0007669"/>
    <property type="project" value="UniProtKB-SubCell"/>
</dbReference>
<dbReference type="GO" id="GO:0030904">
    <property type="term" value="C:retromer complex"/>
    <property type="evidence" value="ECO:0000250"/>
    <property type="project" value="UniProtKB"/>
</dbReference>
<dbReference type="GO" id="GO:0001726">
    <property type="term" value="C:ruffle"/>
    <property type="evidence" value="ECO:0007669"/>
    <property type="project" value="UniProtKB-SubCell"/>
</dbReference>
<dbReference type="GO" id="GO:0097422">
    <property type="term" value="C:tubular endosome"/>
    <property type="evidence" value="ECO:0000250"/>
    <property type="project" value="UniProtKB"/>
</dbReference>
<dbReference type="GO" id="GO:0031748">
    <property type="term" value="F:D1 dopamine receptor binding"/>
    <property type="evidence" value="ECO:0000314"/>
    <property type="project" value="RGD"/>
</dbReference>
<dbReference type="GO" id="GO:0034452">
    <property type="term" value="F:dynactin binding"/>
    <property type="evidence" value="ECO:0000250"/>
    <property type="project" value="UniProtKB"/>
</dbReference>
<dbReference type="GO" id="GO:0035091">
    <property type="term" value="F:phosphatidylinositol binding"/>
    <property type="evidence" value="ECO:0000314"/>
    <property type="project" value="UniProtKB"/>
</dbReference>
<dbReference type="GO" id="GO:0080025">
    <property type="term" value="F:phosphatidylinositol-3,5-bisphosphate binding"/>
    <property type="evidence" value="ECO:0000314"/>
    <property type="project" value="RGD"/>
</dbReference>
<dbReference type="GO" id="GO:0070273">
    <property type="term" value="F:phosphatidylinositol-4-phosphate binding"/>
    <property type="evidence" value="ECO:0000314"/>
    <property type="project" value="RGD"/>
</dbReference>
<dbReference type="GO" id="GO:0010314">
    <property type="term" value="F:phosphatidylinositol-5-phosphate binding"/>
    <property type="evidence" value="ECO:0000314"/>
    <property type="project" value="RGD"/>
</dbReference>
<dbReference type="GO" id="GO:0007174">
    <property type="term" value="P:epidermal growth factor catabolic process"/>
    <property type="evidence" value="ECO:0000314"/>
    <property type="project" value="RGD"/>
</dbReference>
<dbReference type="GO" id="GO:0006886">
    <property type="term" value="P:intracellular protein transport"/>
    <property type="evidence" value="ECO:0007669"/>
    <property type="project" value="InterPro"/>
</dbReference>
<dbReference type="GO" id="GO:0045776">
    <property type="term" value="P:negative regulation of blood pressure"/>
    <property type="evidence" value="ECO:0000315"/>
    <property type="project" value="RGD"/>
</dbReference>
<dbReference type="GO" id="GO:0006907">
    <property type="term" value="P:pinocytosis"/>
    <property type="evidence" value="ECO:0000250"/>
    <property type="project" value="UniProtKB"/>
</dbReference>
<dbReference type="GO" id="GO:0045893">
    <property type="term" value="P:positive regulation of DNA-templated transcription"/>
    <property type="evidence" value="ECO:0000266"/>
    <property type="project" value="RGD"/>
</dbReference>
<dbReference type="GO" id="GO:0046628">
    <property type="term" value="P:positive regulation of insulin receptor signaling pathway"/>
    <property type="evidence" value="ECO:0000266"/>
    <property type="project" value="RGD"/>
</dbReference>
<dbReference type="GO" id="GO:0042147">
    <property type="term" value="P:retrograde transport, endosome to Golgi"/>
    <property type="evidence" value="ECO:0000266"/>
    <property type="project" value="RGD"/>
</dbReference>
<dbReference type="CDD" id="cd07663">
    <property type="entry name" value="BAR_SNX5"/>
    <property type="match status" value="1"/>
</dbReference>
<dbReference type="CDD" id="cd07291">
    <property type="entry name" value="PX_SNX5"/>
    <property type="match status" value="1"/>
</dbReference>
<dbReference type="FunFam" id="1.20.1270.60:FF:000008">
    <property type="entry name" value="Sorting nexin"/>
    <property type="match status" value="1"/>
</dbReference>
<dbReference type="FunFam" id="3.30.1520.10:FF:000001">
    <property type="entry name" value="Sorting nexin"/>
    <property type="match status" value="1"/>
</dbReference>
<dbReference type="Gene3D" id="1.20.1270.60">
    <property type="entry name" value="Arfaptin homology (AH) domain/BAR domain"/>
    <property type="match status" value="1"/>
</dbReference>
<dbReference type="Gene3D" id="3.30.1520.10">
    <property type="entry name" value="Phox-like domain"/>
    <property type="match status" value="1"/>
</dbReference>
<dbReference type="InterPro" id="IPR027267">
    <property type="entry name" value="AH/BAR_dom_sf"/>
</dbReference>
<dbReference type="InterPro" id="IPR028654">
    <property type="entry name" value="BAR_SNX5"/>
</dbReference>
<dbReference type="InterPro" id="IPR001683">
    <property type="entry name" value="PX_dom"/>
</dbReference>
<dbReference type="InterPro" id="IPR036871">
    <property type="entry name" value="PX_dom_sf"/>
</dbReference>
<dbReference type="InterPro" id="IPR042135">
    <property type="entry name" value="PX_SNX5"/>
</dbReference>
<dbReference type="InterPro" id="IPR014637">
    <property type="entry name" value="SNX5/SNX6/SNX32"/>
</dbReference>
<dbReference type="InterPro" id="IPR015404">
    <property type="entry name" value="Vps5_C"/>
</dbReference>
<dbReference type="PANTHER" id="PTHR45850">
    <property type="entry name" value="SORTING NEXIN FAMILY MEMBER"/>
    <property type="match status" value="1"/>
</dbReference>
<dbReference type="PANTHER" id="PTHR45850:SF5">
    <property type="entry name" value="SORTING NEXIN-5"/>
    <property type="match status" value="1"/>
</dbReference>
<dbReference type="Pfam" id="PF00787">
    <property type="entry name" value="PX"/>
    <property type="match status" value="1"/>
</dbReference>
<dbReference type="Pfam" id="PF09325">
    <property type="entry name" value="Vps5"/>
    <property type="match status" value="1"/>
</dbReference>
<dbReference type="PIRSF" id="PIRSF036924">
    <property type="entry name" value="Snx5_Snx6"/>
    <property type="match status" value="1"/>
</dbReference>
<dbReference type="SUPFAM" id="SSF103657">
    <property type="entry name" value="BAR/IMD domain-like"/>
    <property type="match status" value="1"/>
</dbReference>
<dbReference type="SUPFAM" id="SSF64268">
    <property type="entry name" value="PX domain"/>
    <property type="match status" value="1"/>
</dbReference>
<dbReference type="PROSITE" id="PS50195">
    <property type="entry name" value="PX"/>
    <property type="match status" value="1"/>
</dbReference>
<reference key="1">
    <citation type="journal article" date="2004" name="Genome Res.">
        <title>The status, quality, and expansion of the NIH full-length cDNA project: the Mammalian Gene Collection (MGC).</title>
        <authorList>
            <consortium name="The MGC Project Team"/>
        </authorList>
    </citation>
    <scope>NUCLEOTIDE SEQUENCE [LARGE SCALE MRNA]</scope>
    <source>
        <tissue>Thymus</tissue>
    </source>
</reference>
<reference key="2">
    <citation type="journal article" date="2009" name="J. Biol. Chem.">
        <title>The phox domain of sorting nexin 5 lacks phosphatidylinositol 3-phosphate (PtdIns(3)P) specificity and preferentially binds to phosphatidylinositol 4,5-bisphosphate (PtdIns(4,5)P2).</title>
        <authorList>
            <person name="Koharudin L.M."/>
            <person name="Furey W."/>
            <person name="Liu H."/>
            <person name="Liu Y.J."/>
            <person name="Gronenborn A.M."/>
        </authorList>
    </citation>
    <scope>X-RAY CRYSTALLOGRAPHY (1.47 ANGSTROMS) OF 20-180</scope>
    <scope>STRUCTURE BY NMR OF 20-180</scope>
    <scope>DOMAIN</scope>
    <scope>PHOSPHATIDYLINOSITOL 4,5-BISPHOSPHATE BINDING</scope>
</reference>
<comment type="function">
    <text evidence="1">Involved in several stages of intracellular trafficking. Interacts with membranes containing phosphatidylinositol lipids. Acts in part as component of the retromer membrane-deforming SNX-BAR subcomplex. The SNX-BAR retromer mediates retrograde transport of cargo proteins from endosomes to the trans-Golgi network (TGN) and is involved in endosome-to-plasma membrane transport for cargo protein recycling. The SNX-BAR subcomplex functions to deform the donor membrane into a tubular profile called endosome-to-TGN transport carrier (ETC). Does not have in vitro vesicle-to-membrane remodeling activity. Involved in retrograde transport of lysosomal enzyme receptor IGF2R. May function as link between endosomal transport vesicles and dynactin. Plays a role in the internalization of EGFR after EGF stimulation. Involved in EGFR endosomal sorting and degradation; the function involves PIP5K1C and is retromer-independent. Together with PIP5K1C facilitates HGS interaction with ubiquitinated EGFR, which initiates EGFR sorting to intraluminal vesicles (ILVs) of the multivesicular body for subsequent lysosomal degradation. Involved in E-cadherin sorting and degradation; inhibits PIP5K1C-mediated E-cadherin degradation. Plays a role in macropinocytosis (By similarity).</text>
</comment>
<comment type="subunit">
    <text evidence="1">Forms heterodimers with BAR domain-containing sorting nexins SNX1 and SNX2; does not homodimerize. The heterodimers are proposed to self-assemble into helical arrays on the membrane to stabilize and expand local membrane curvature underlying endosomal tubule formation. Thought to be a component of the originally described retromer complex (also called SNX-BAR retromer) which is a pentamer containing the heterotrimeric retromer cargo-selective complex (CSC), also described as vacuolar protein sorting subcomplex (VPS), and a heterodimeric membrane-deforming subcomplex formed between SNX1 or SNX2 and SNX5 or SNX6 (also called SNX-BAR subcomplex); the respective CSC and SNX-BAR subcomplexes associate with low affinity. Interacts with SNX1, SNX2, VPS26A, VPS29, VPS35, DCTN1, DOCK1, MIB1, PIP5K1C. Interacts with HGS; increased by PIP5K1C kinase activity and by PtdIns(3P) and/or PtdIns(3,4)P2 (By similarity).</text>
</comment>
<comment type="subcellular location">
    <subcellularLocation>
        <location evidence="1">Endosome</location>
    </subcellularLocation>
    <subcellularLocation>
        <location evidence="1">Early endosome</location>
    </subcellularLocation>
    <subcellularLocation>
        <location evidence="1">Early endosome membrane</location>
        <topology>Peripheral membrane protein</topology>
        <orientation>Cytoplasmic side</orientation>
    </subcellularLocation>
    <subcellularLocation>
        <location evidence="1">Cell membrane</location>
        <topology>Peripheral membrane protein</topology>
        <orientation evidence="1">Cytoplasmic side</orientation>
    </subcellularLocation>
    <subcellularLocation>
        <location>Cytoplasmic vesicle membrane</location>
        <topology>Peripheral membrane protein</topology>
        <orientation>Cytoplasmic side</orientation>
    </subcellularLocation>
    <subcellularLocation>
        <location>Cytoplasm</location>
    </subcellularLocation>
    <subcellularLocation>
        <location>Cell projection</location>
        <location>Phagocytic cup</location>
    </subcellularLocation>
    <subcellularLocation>
        <location>Cell projection</location>
        <location>Ruffle</location>
    </subcellularLocation>
    <text evidence="1">Recruited to the plasma membrane after EGF stimulation, which leads to increased levels of phosphatidylinositol 3,4-bisphosphate (PdtIns(3,4)P2). Detected on macropinosomes. Targeted to membrane ruffles in response to EGFR stimulation (By similarity).</text>
</comment>
<comment type="domain">
    <text evidence="3">The PX domain mediates interaction with membranes enriched in phosphatidylinositol 3,4-bisphosphate and/or phosphatidylinositol 4,5-bisphosphate.</text>
</comment>
<comment type="domain">
    <text evidence="1">The BAR domain is able to sense membrane curvature upon dimerization. Membrane remodeling seems to implicate insertion of an amphipathic helix (AH) in the membrane (By similarity).</text>
</comment>
<comment type="similarity">
    <text evidence="4">Belongs to the sorting nexin family.</text>
</comment>
<comment type="caution">
    <text evidence="5">The selectivity for particular phosphatidylinositol lipids is under debate. According to one report (PubMed:19553671), the rat protein binds exclusively to phosphatidylinositol 4,5-bisphosphate, while the human protein has been reported (PubMed:15561769) to bind to phosphatidylinositol 3,4-bisphosphate and also to phosphatidylinositol 3-phosphate.</text>
</comment>